<organism>
    <name type="scientific">Escherichia coli O7:K1 (strain IAI39 / ExPEC)</name>
    <dbReference type="NCBI Taxonomy" id="585057"/>
    <lineage>
        <taxon>Bacteria</taxon>
        <taxon>Pseudomonadati</taxon>
        <taxon>Pseudomonadota</taxon>
        <taxon>Gammaproteobacteria</taxon>
        <taxon>Enterobacterales</taxon>
        <taxon>Enterobacteriaceae</taxon>
        <taxon>Escherichia</taxon>
    </lineage>
</organism>
<comment type="function">
    <text evidence="1">Component of the sulfite reductase complex that catalyzes the 6-electron reduction of sulfite to sulfide. This is one of several activities required for the biosynthesis of L-cysteine from sulfate.</text>
</comment>
<comment type="catalytic activity">
    <reaction evidence="1">
        <text>hydrogen sulfide + 3 NADP(+) + 3 H2O = sulfite + 3 NADPH + 4 H(+)</text>
        <dbReference type="Rhea" id="RHEA:13801"/>
        <dbReference type="ChEBI" id="CHEBI:15377"/>
        <dbReference type="ChEBI" id="CHEBI:15378"/>
        <dbReference type="ChEBI" id="CHEBI:17359"/>
        <dbReference type="ChEBI" id="CHEBI:29919"/>
        <dbReference type="ChEBI" id="CHEBI:57783"/>
        <dbReference type="ChEBI" id="CHEBI:58349"/>
        <dbReference type="EC" id="1.8.1.2"/>
    </reaction>
</comment>
<comment type="cofactor">
    <cofactor evidence="1">
        <name>siroheme</name>
        <dbReference type="ChEBI" id="CHEBI:60052"/>
    </cofactor>
    <text evidence="1">Binds 1 siroheme per subunit.</text>
</comment>
<comment type="cofactor">
    <cofactor evidence="1">
        <name>[4Fe-4S] cluster</name>
        <dbReference type="ChEBI" id="CHEBI:49883"/>
    </cofactor>
    <text evidence="1">Binds 1 [4Fe-4S] cluster per subunit.</text>
</comment>
<comment type="pathway">
    <text evidence="1">Sulfur metabolism; hydrogen sulfide biosynthesis; hydrogen sulfide from sulfite (NADPH route): step 1/1.</text>
</comment>
<comment type="subunit">
    <text evidence="1">Alpha(8)-beta(8). The alpha component is a flavoprotein, the beta component is a hemoprotein.</text>
</comment>
<comment type="similarity">
    <text evidence="1">Belongs to the nitrite and sulfite reductase 4Fe-4S domain family.</text>
</comment>
<gene>
    <name evidence="1" type="primary">cysI</name>
    <name type="ordered locus">ECIAI39_2945</name>
</gene>
<keyword id="KW-0004">4Fe-4S</keyword>
<keyword id="KW-0028">Amino-acid biosynthesis</keyword>
<keyword id="KW-0198">Cysteine biosynthesis</keyword>
<keyword id="KW-0349">Heme</keyword>
<keyword id="KW-0408">Iron</keyword>
<keyword id="KW-0411">Iron-sulfur</keyword>
<keyword id="KW-0479">Metal-binding</keyword>
<keyword id="KW-0521">NADP</keyword>
<keyword id="KW-0560">Oxidoreductase</keyword>
<dbReference type="EC" id="1.8.1.2" evidence="1"/>
<dbReference type="EMBL" id="CU928164">
    <property type="protein sequence ID" value="CAR19064.1"/>
    <property type="molecule type" value="Genomic_DNA"/>
</dbReference>
<dbReference type="RefSeq" id="WP_001003082.1">
    <property type="nucleotide sequence ID" value="NC_011750.1"/>
</dbReference>
<dbReference type="RefSeq" id="YP_002408876.1">
    <property type="nucleotide sequence ID" value="NC_011750.1"/>
</dbReference>
<dbReference type="SMR" id="B7NTA0"/>
<dbReference type="STRING" id="585057.ECIAI39_2945"/>
<dbReference type="KEGG" id="ect:ECIAI39_2945"/>
<dbReference type="PATRIC" id="fig|585057.6.peg.3054"/>
<dbReference type="HOGENOM" id="CLU_001975_3_2_6"/>
<dbReference type="UniPathway" id="UPA00140">
    <property type="reaction ID" value="UER00207"/>
</dbReference>
<dbReference type="Proteomes" id="UP000000749">
    <property type="component" value="Chromosome"/>
</dbReference>
<dbReference type="GO" id="GO:0009337">
    <property type="term" value="C:sulfite reductase complex (NADPH)"/>
    <property type="evidence" value="ECO:0007669"/>
    <property type="project" value="InterPro"/>
</dbReference>
<dbReference type="GO" id="GO:0051539">
    <property type="term" value="F:4 iron, 4 sulfur cluster binding"/>
    <property type="evidence" value="ECO:0007669"/>
    <property type="project" value="UniProtKB-KW"/>
</dbReference>
<dbReference type="GO" id="GO:0020037">
    <property type="term" value="F:heme binding"/>
    <property type="evidence" value="ECO:0007669"/>
    <property type="project" value="InterPro"/>
</dbReference>
<dbReference type="GO" id="GO:0046872">
    <property type="term" value="F:metal ion binding"/>
    <property type="evidence" value="ECO:0007669"/>
    <property type="project" value="UniProtKB-KW"/>
</dbReference>
<dbReference type="GO" id="GO:0050661">
    <property type="term" value="F:NADP binding"/>
    <property type="evidence" value="ECO:0007669"/>
    <property type="project" value="InterPro"/>
</dbReference>
<dbReference type="GO" id="GO:0050311">
    <property type="term" value="F:sulfite reductase (ferredoxin) activity"/>
    <property type="evidence" value="ECO:0007669"/>
    <property type="project" value="TreeGrafter"/>
</dbReference>
<dbReference type="GO" id="GO:0004783">
    <property type="term" value="F:sulfite reductase (NADPH) activity"/>
    <property type="evidence" value="ECO:0007669"/>
    <property type="project" value="UniProtKB-UniRule"/>
</dbReference>
<dbReference type="GO" id="GO:0019344">
    <property type="term" value="P:cysteine biosynthetic process"/>
    <property type="evidence" value="ECO:0007669"/>
    <property type="project" value="UniProtKB-KW"/>
</dbReference>
<dbReference type="GO" id="GO:0070814">
    <property type="term" value="P:hydrogen sulfide biosynthetic process"/>
    <property type="evidence" value="ECO:0007669"/>
    <property type="project" value="UniProtKB-UniRule"/>
</dbReference>
<dbReference type="GO" id="GO:0000103">
    <property type="term" value="P:sulfate assimilation"/>
    <property type="evidence" value="ECO:0007669"/>
    <property type="project" value="UniProtKB-UniRule"/>
</dbReference>
<dbReference type="FunFam" id="3.30.413.10:FF:000003">
    <property type="entry name" value="Sulfite reductase [NADPH] hemoprotein beta-component"/>
    <property type="match status" value="1"/>
</dbReference>
<dbReference type="FunFam" id="3.30.413.10:FF:000004">
    <property type="entry name" value="Sulfite reductase [NADPH] hemoprotein beta-component"/>
    <property type="match status" value="1"/>
</dbReference>
<dbReference type="Gene3D" id="3.30.413.10">
    <property type="entry name" value="Sulfite Reductase Hemoprotein, domain 1"/>
    <property type="match status" value="2"/>
</dbReference>
<dbReference type="HAMAP" id="MF_01540">
    <property type="entry name" value="CysI"/>
    <property type="match status" value="1"/>
</dbReference>
<dbReference type="InterPro" id="IPR011786">
    <property type="entry name" value="CysI"/>
</dbReference>
<dbReference type="InterPro" id="IPR005117">
    <property type="entry name" value="NiRdtase/SiRdtase_haem-b_fer"/>
</dbReference>
<dbReference type="InterPro" id="IPR036136">
    <property type="entry name" value="Nit/Sulf_reduc_fer-like_dom_sf"/>
</dbReference>
<dbReference type="InterPro" id="IPR006067">
    <property type="entry name" value="NO2/SO3_Rdtase_4Fe4S_dom"/>
</dbReference>
<dbReference type="InterPro" id="IPR045169">
    <property type="entry name" value="NO2/SO3_Rdtase_4Fe4S_prot"/>
</dbReference>
<dbReference type="InterPro" id="IPR045854">
    <property type="entry name" value="NO2/SO3_Rdtase_4Fe4S_sf"/>
</dbReference>
<dbReference type="InterPro" id="IPR006066">
    <property type="entry name" value="NO2/SO3_Rdtase_FeS/sirohaem_BS"/>
</dbReference>
<dbReference type="NCBIfam" id="TIGR02041">
    <property type="entry name" value="CysI"/>
    <property type="match status" value="1"/>
</dbReference>
<dbReference type="NCBIfam" id="NF010029">
    <property type="entry name" value="PRK13504.1"/>
    <property type="match status" value="1"/>
</dbReference>
<dbReference type="PANTHER" id="PTHR11493:SF47">
    <property type="entry name" value="SULFITE REDUCTASE [NADPH] SUBUNIT BETA"/>
    <property type="match status" value="1"/>
</dbReference>
<dbReference type="PANTHER" id="PTHR11493">
    <property type="entry name" value="SULFITE REDUCTASE [NADPH] SUBUNIT BETA-RELATED"/>
    <property type="match status" value="1"/>
</dbReference>
<dbReference type="Pfam" id="PF01077">
    <property type="entry name" value="NIR_SIR"/>
    <property type="match status" value="1"/>
</dbReference>
<dbReference type="Pfam" id="PF03460">
    <property type="entry name" value="NIR_SIR_ferr"/>
    <property type="match status" value="2"/>
</dbReference>
<dbReference type="PRINTS" id="PR00397">
    <property type="entry name" value="SIROHAEM"/>
</dbReference>
<dbReference type="SUPFAM" id="SSF56014">
    <property type="entry name" value="Nitrite and sulphite reductase 4Fe-4S domain-like"/>
    <property type="match status" value="2"/>
</dbReference>
<dbReference type="SUPFAM" id="SSF55124">
    <property type="entry name" value="Nitrite/Sulfite reductase N-terminal domain-like"/>
    <property type="match status" value="2"/>
</dbReference>
<dbReference type="PROSITE" id="PS00365">
    <property type="entry name" value="NIR_SIR"/>
    <property type="match status" value="1"/>
</dbReference>
<name>CYSI_ECO7I</name>
<accession>B7NTA0</accession>
<sequence length="570" mass="64085">MNEKHPGPLVVEGKLTDAERMKLESNYLRGTIAEDLNDGLTGGFKGDNFLLIRFHGMYQQDDRDIRAERAEQKLEPRHAMLLRCRLPGGVITTKQWQAIDKFAGENTIYGSIRLTNRQTFQFHGILKKNVKPVHQMLHSVGLDALATANDMNRNVLCTSNPYESQLHAEAYEWAKKISEHLLPRTRAYAEIWLDQEKVATTDEEPILGQTYLPRKFKTTVVIPPQNDIDLHANDMNFVAIAENGKLVGFNLLVGGGLSIEHGNRKTYARTASEFGYLPLEHTLAVAEAVVTTQRDWGNRTDRKNAKTKYTLERVGVETFKAEVERRAGIKFEPIRPYEFTGRSDRIGWVKGIDDKWHLTLFIENGRILDYPGRPLKTGLLEIAKIHKGDFRITANQNLIIAGVPESEKAKIEKIAKESGLMNAVTPQRENSMACVSFPTCPLAMAEAERFLPSFIDNIDNLMAKHGVSDEHIVMRVTGCPNGCGRAMLAEVGLVGKAPGRYNLHLGGNRIGTRIPRMYKENITEPEILALLDELIGRWAKEREAGEGFGDFTVRAGIIRPVLDPARDLWD</sequence>
<evidence type="ECO:0000255" key="1">
    <source>
        <dbReference type="HAMAP-Rule" id="MF_01540"/>
    </source>
</evidence>
<reference key="1">
    <citation type="journal article" date="2009" name="PLoS Genet.">
        <title>Organised genome dynamics in the Escherichia coli species results in highly diverse adaptive paths.</title>
        <authorList>
            <person name="Touchon M."/>
            <person name="Hoede C."/>
            <person name="Tenaillon O."/>
            <person name="Barbe V."/>
            <person name="Baeriswyl S."/>
            <person name="Bidet P."/>
            <person name="Bingen E."/>
            <person name="Bonacorsi S."/>
            <person name="Bouchier C."/>
            <person name="Bouvet O."/>
            <person name="Calteau A."/>
            <person name="Chiapello H."/>
            <person name="Clermont O."/>
            <person name="Cruveiller S."/>
            <person name="Danchin A."/>
            <person name="Diard M."/>
            <person name="Dossat C."/>
            <person name="Karoui M.E."/>
            <person name="Frapy E."/>
            <person name="Garry L."/>
            <person name="Ghigo J.M."/>
            <person name="Gilles A.M."/>
            <person name="Johnson J."/>
            <person name="Le Bouguenec C."/>
            <person name="Lescat M."/>
            <person name="Mangenot S."/>
            <person name="Martinez-Jehanne V."/>
            <person name="Matic I."/>
            <person name="Nassif X."/>
            <person name="Oztas S."/>
            <person name="Petit M.A."/>
            <person name="Pichon C."/>
            <person name="Rouy Z."/>
            <person name="Ruf C.S."/>
            <person name="Schneider D."/>
            <person name="Tourret J."/>
            <person name="Vacherie B."/>
            <person name="Vallenet D."/>
            <person name="Medigue C."/>
            <person name="Rocha E.P.C."/>
            <person name="Denamur E."/>
        </authorList>
    </citation>
    <scope>NUCLEOTIDE SEQUENCE [LARGE SCALE GENOMIC DNA]</scope>
    <source>
        <strain>IAI39 / ExPEC</strain>
    </source>
</reference>
<protein>
    <recommendedName>
        <fullName evidence="1">Sulfite reductase [NADPH] hemoprotein beta-component</fullName>
        <shortName evidence="1">SiR-HP</shortName>
        <shortName evidence="1">SiRHP</shortName>
        <ecNumber evidence="1">1.8.1.2</ecNumber>
    </recommendedName>
</protein>
<feature type="chain" id="PRO_1000146645" description="Sulfite reductase [NADPH] hemoprotein beta-component">
    <location>
        <begin position="1"/>
        <end position="570"/>
    </location>
</feature>
<feature type="binding site" evidence="1">
    <location>
        <position position="434"/>
    </location>
    <ligand>
        <name>[4Fe-4S] cluster</name>
        <dbReference type="ChEBI" id="CHEBI:49883"/>
    </ligand>
</feature>
<feature type="binding site" evidence="1">
    <location>
        <position position="440"/>
    </location>
    <ligand>
        <name>[4Fe-4S] cluster</name>
        <dbReference type="ChEBI" id="CHEBI:49883"/>
    </ligand>
</feature>
<feature type="binding site" evidence="1">
    <location>
        <position position="479"/>
    </location>
    <ligand>
        <name>[4Fe-4S] cluster</name>
        <dbReference type="ChEBI" id="CHEBI:49883"/>
    </ligand>
</feature>
<feature type="binding site" evidence="1">
    <location>
        <position position="483"/>
    </location>
    <ligand>
        <name>[4Fe-4S] cluster</name>
        <dbReference type="ChEBI" id="CHEBI:49883"/>
    </ligand>
</feature>
<feature type="binding site" description="axial binding residue" evidence="1">
    <location>
        <position position="483"/>
    </location>
    <ligand>
        <name>siroheme</name>
        <dbReference type="ChEBI" id="CHEBI:60052"/>
    </ligand>
    <ligandPart>
        <name>Fe</name>
        <dbReference type="ChEBI" id="CHEBI:18248"/>
    </ligandPart>
</feature>
<proteinExistence type="inferred from homology"/>